<reference key="1">
    <citation type="journal article" date="1994" name="Curr. Genet.">
        <title>Genes for components of the chloroplast translational apparatus are conserved in the reduced 73-kb plastid DNA of the nonphotosynthetic euglenoid flagellate Astasia longa.</title>
        <authorList>
            <person name="Gockel G."/>
            <person name="Hachtel W."/>
            <person name="Baier S."/>
            <person name="Fliss C."/>
            <person name="Henke M."/>
        </authorList>
    </citation>
    <scope>NUCLEOTIDE SEQUENCE [GENOMIC DNA]</scope>
    <source>
        <strain>CCAP 1204-17a</strain>
    </source>
</reference>
<reference key="2">
    <citation type="journal article" date="2000" name="Protist">
        <title>Complete gene map of the plastid genome of the nonphotosynthetic euglenoid flagellate Astasia longa.</title>
        <authorList>
            <person name="Gockel G."/>
            <person name="Hachtel W."/>
        </authorList>
    </citation>
    <scope>NUCLEOTIDE SEQUENCE [LARGE SCALE GENOMIC DNA]</scope>
    <source>
        <strain>CCAP 1204-17a</strain>
    </source>
</reference>
<protein>
    <recommendedName>
        <fullName>Uncharacterized 13.3 kDa protein in rpl23-rpl2 intergenic region</fullName>
    </recommendedName>
    <alternativeName>
        <fullName>ORF105</fullName>
    </alternativeName>
</protein>
<geneLocation type="non-photosynthetic plastid"/>
<organism>
    <name type="scientific">Euglena longa</name>
    <name type="common">Euglenophycean alga</name>
    <name type="synonym">Astasia longa</name>
    <dbReference type="NCBI Taxonomy" id="3037"/>
    <lineage>
        <taxon>Eukaryota</taxon>
        <taxon>Discoba</taxon>
        <taxon>Euglenozoa</taxon>
        <taxon>Euglenida</taxon>
        <taxon>Spirocuta</taxon>
        <taxon>Euglenophyceae</taxon>
        <taxon>Euglenales</taxon>
        <taxon>Euglenaceae</taxon>
        <taxon>Euglena</taxon>
    </lineage>
</organism>
<keyword id="KW-0934">Plastid</keyword>
<accession>P34780</accession>
<sequence>MFFDLYEIILYILFFCVIFYGFLSFIELFYYLRDPRKRKKIIYIIIYIFCFLILMYILLIMDSYFIVNIIEFYQKYENGFKFFDNINRVILMHLEKGFNFFKSLF</sequence>
<dbReference type="EMBL" id="AJ294725">
    <property type="protein sequence ID" value="CAC24594.1"/>
    <property type="molecule type" value="Genomic_DNA"/>
</dbReference>
<dbReference type="PIR" id="S38605">
    <property type="entry name" value="S38605"/>
</dbReference>
<dbReference type="RefSeq" id="NP_074983.1">
    <property type="nucleotide sequence ID" value="NC_002652.1"/>
</dbReference>
<dbReference type="SMR" id="P34780"/>
<dbReference type="GeneID" id="1457312"/>
<dbReference type="GO" id="GO:0009536">
    <property type="term" value="C:plastid"/>
    <property type="evidence" value="ECO:0007669"/>
    <property type="project" value="UniProtKB-SubCell"/>
</dbReference>
<name>YCX6_EUGLO</name>
<comment type="subcellular location">
    <subcellularLocation>
        <location>Plastid</location>
    </subcellularLocation>
</comment>
<proteinExistence type="predicted"/>
<feature type="chain" id="PRO_0000217489" description="Uncharacterized 13.3 kDa protein in rpl23-rpl2 intergenic region">
    <location>
        <begin position="1"/>
        <end position="105"/>
    </location>
</feature>